<accession>Q93903</accession>
<feature type="chain" id="PRO_0000435337" description="Protein gfi-3" evidence="5">
    <location>
        <begin position="1"/>
        <end position="800"/>
    </location>
</feature>
<feature type="repeat" description="TPR 1" evidence="2">
    <location>
        <begin position="526"/>
        <end position="559"/>
    </location>
</feature>
<feature type="repeat" description="TPR 2" evidence="2">
    <location>
        <begin position="637"/>
        <end position="670"/>
    </location>
</feature>
<feature type="coiled-coil region" evidence="1">
    <location>
        <begin position="346"/>
        <end position="366"/>
    </location>
</feature>
<name>GFI3_CAEEL</name>
<organism evidence="7">
    <name type="scientific">Caenorhabditis elegans</name>
    <dbReference type="NCBI Taxonomy" id="6239"/>
    <lineage>
        <taxon>Eukaryota</taxon>
        <taxon>Metazoa</taxon>
        <taxon>Ecdysozoa</taxon>
        <taxon>Nematoda</taxon>
        <taxon>Chromadorea</taxon>
        <taxon>Rhabditida</taxon>
        <taxon>Rhabditina</taxon>
        <taxon>Rhabditomorpha</taxon>
        <taxon>Rhabditoidea</taxon>
        <taxon>Rhabditidae</taxon>
        <taxon>Peloderinae</taxon>
        <taxon>Caenorhabditis</taxon>
    </lineage>
</organism>
<gene>
    <name evidence="8" type="primary">gfi-3</name>
    <name evidence="8" type="ORF">M163.4</name>
</gene>
<proteinExistence type="evidence at transcript level"/>
<evidence type="ECO:0000255" key="1"/>
<evidence type="ECO:0000255" key="2">
    <source>
        <dbReference type="PROSITE-ProRule" id="PRU00339"/>
    </source>
</evidence>
<evidence type="ECO:0000269" key="3">
    <source>
    </source>
</evidence>
<evidence type="ECO:0000269" key="4">
    <source>
    </source>
</evidence>
<evidence type="ECO:0000305" key="5"/>
<evidence type="ECO:0000312" key="6">
    <source>
        <dbReference type="EMBL" id="CAB01894.1"/>
    </source>
</evidence>
<evidence type="ECO:0000312" key="7">
    <source>
        <dbReference type="Proteomes" id="UP000001940"/>
    </source>
</evidence>
<evidence type="ECO:0000312" key="8">
    <source>
        <dbReference type="WormBase" id="M163.4"/>
    </source>
</evidence>
<reference evidence="7" key="1">
    <citation type="journal article" date="1998" name="Science">
        <title>Genome sequence of the nematode C. elegans: a platform for investigating biology.</title>
        <authorList>
            <consortium name="The C. elegans sequencing consortium"/>
        </authorList>
    </citation>
    <scope>NUCLEOTIDE SEQUENCE [LARGE SCALE GENOMIC DNA]</scope>
    <source>
        <strain evidence="7">Bristol N2</strain>
    </source>
</reference>
<reference evidence="5" key="2">
    <citation type="journal article" date="2002" name="Genetics">
        <title>Multiple subunits of the Caenorhabditis elegans anaphase-promoting complex are required for chromosome segregation during meiosis I.</title>
        <authorList>
            <person name="Davis E.S."/>
            <person name="Wille L."/>
            <person name="Chestnut B.A."/>
            <person name="Sadler P.L."/>
            <person name="Shakes D.C."/>
            <person name="Golden A."/>
        </authorList>
    </citation>
    <scope>DISRUPTION PHENOTYPE</scope>
</reference>
<reference evidence="5" key="3">
    <citation type="journal article" date="2010" name="Genetics">
        <title>Functional redundancy of paralogs of an anaphase promoting complex/cyclosome subunit in Caenorhabditis elegans meiosis.</title>
        <authorList>
            <person name="Stein K.K."/>
            <person name="Nesmith J.E."/>
            <person name="Ross B.D."/>
            <person name="Golden A."/>
        </authorList>
    </citation>
    <scope>FUNCTION</scope>
    <scope>TISSUE SPECIFICITY</scope>
    <scope>DEVELOPMENTAL STAGE</scope>
    <scope>DISRUPTION PHENOTYPE</scope>
</reference>
<comment type="function">
    <text evidence="4">Probable component of the anaphase promoting complex/cyclosome (APC/C), a cell cycle-regulated E3 ubiquitin ligase that controls progression through mitosis and the G1 phase of the cell cycle. The APC/C complex acts by mediating ubiquitination and subsequent degradation of target proteins. Required for the metaphase to anaphase transition in meiosis.</text>
</comment>
<comment type="pathway">
    <text evidence="5">Protein modification; protein ubiquitination.</text>
</comment>
<comment type="subunit">
    <text evidence="5">The APC/C complex is probably composed of at least 12 subunits: apc-2, apc-10, apc-11, cdc-26, emb-1, emb-27, emb-30, mat-1, mat-2, mat-3, such-1 and gfi-3.</text>
</comment>
<comment type="tissue specificity">
    <text evidence="4">Expressed in gut cells and mature sperm stored in the spermatheca.</text>
</comment>
<comment type="developmental stage">
    <text evidence="4">Expressed in the developing germ line and throughout embryogenesis and the L1-L4 larval stages.</text>
</comment>
<comment type="disruption phenotype">
    <text evidence="3 4">RNAi-mediated knockdown results in both viable and inviable embryos, but eventually animals display germline maintenance defects and become sterile (PubMed:11861581). Double RNAi-mediated knockdown and/or mutagenesis with such-1 results in increased embryonic lethality and the production of one-cell arrested embryos (PubMed:20944012).</text>
</comment>
<keyword id="KW-0131">Cell cycle</keyword>
<keyword id="KW-0132">Cell division</keyword>
<keyword id="KW-0175">Coiled coil</keyword>
<keyword id="KW-0217">Developmental protein</keyword>
<keyword id="KW-0469">Meiosis</keyword>
<keyword id="KW-0498">Mitosis</keyword>
<keyword id="KW-1185">Reference proteome</keyword>
<keyword id="KW-0677">Repeat</keyword>
<keyword id="KW-0802">TPR repeat</keyword>
<keyword id="KW-0833">Ubl conjugation pathway</keyword>
<protein>
    <recommendedName>
        <fullName evidence="6">Protein gfi-3</fullName>
    </recommendedName>
</protein>
<dbReference type="EMBL" id="Z79603">
    <property type="protein sequence ID" value="CAB01894.1"/>
    <property type="molecule type" value="Genomic_DNA"/>
</dbReference>
<dbReference type="PIR" id="T23780">
    <property type="entry name" value="T23780"/>
</dbReference>
<dbReference type="RefSeq" id="NP_510409.1">
    <property type="nucleotide sequence ID" value="NM_078008.7"/>
</dbReference>
<dbReference type="SMR" id="Q93903"/>
<dbReference type="ComplexPortal" id="CPX-3382">
    <property type="entry name" value="Anaphase-promoting complex"/>
</dbReference>
<dbReference type="FunCoup" id="Q93903">
    <property type="interactions" value="1837"/>
</dbReference>
<dbReference type="IntAct" id="Q93903">
    <property type="interactions" value="1"/>
</dbReference>
<dbReference type="STRING" id="6239.M163.4.1"/>
<dbReference type="PaxDb" id="6239-M163.4"/>
<dbReference type="EnsemblMetazoa" id="M163.4.1">
    <property type="protein sequence ID" value="M163.4.1"/>
    <property type="gene ID" value="WBGene00001583"/>
</dbReference>
<dbReference type="GeneID" id="181544"/>
<dbReference type="KEGG" id="cel:CELE_M163.4"/>
<dbReference type="UCSC" id="M163.4">
    <property type="organism name" value="c. elegans"/>
</dbReference>
<dbReference type="AGR" id="WB:WBGene00001583"/>
<dbReference type="CTD" id="181544"/>
<dbReference type="WormBase" id="M163.4">
    <property type="protein sequence ID" value="CE12452"/>
    <property type="gene ID" value="WBGene00001583"/>
    <property type="gene designation" value="gfi-3"/>
</dbReference>
<dbReference type="eggNOG" id="ENOG502S8D6">
    <property type="taxonomic scope" value="Eukaryota"/>
</dbReference>
<dbReference type="GeneTree" id="ENSGT00390000018674"/>
<dbReference type="HOGENOM" id="CLU_351691_0_0_1"/>
<dbReference type="InParanoid" id="Q93903"/>
<dbReference type="OMA" id="NENMVHA"/>
<dbReference type="OrthoDB" id="5773922at2759"/>
<dbReference type="PhylomeDB" id="Q93903"/>
<dbReference type="Reactome" id="R-CEL-983168">
    <property type="pathway name" value="Antigen processing: Ubiquitination &amp; Proteasome degradation"/>
</dbReference>
<dbReference type="UniPathway" id="UPA00143"/>
<dbReference type="PRO" id="PR:Q93903"/>
<dbReference type="Proteomes" id="UP000001940">
    <property type="component" value="Chromosome X"/>
</dbReference>
<dbReference type="Bgee" id="WBGene00001583">
    <property type="expression patterns" value="Expressed in embryo and 4 other cell types or tissues"/>
</dbReference>
<dbReference type="GO" id="GO:0005680">
    <property type="term" value="C:anaphase-promoting complex"/>
    <property type="evidence" value="ECO:0000318"/>
    <property type="project" value="GO_Central"/>
</dbReference>
<dbReference type="GO" id="GO:0031145">
    <property type="term" value="P:anaphase-promoting complex-dependent catabolic process"/>
    <property type="evidence" value="ECO:0000318"/>
    <property type="project" value="GO_Central"/>
</dbReference>
<dbReference type="GO" id="GO:0051301">
    <property type="term" value="P:cell division"/>
    <property type="evidence" value="ECO:0007669"/>
    <property type="project" value="UniProtKB-KW"/>
</dbReference>
<dbReference type="GO" id="GO:0051321">
    <property type="term" value="P:meiotic cell cycle"/>
    <property type="evidence" value="ECO:0007669"/>
    <property type="project" value="UniProtKB-KW"/>
</dbReference>
<dbReference type="GO" id="GO:0045842">
    <property type="term" value="P:positive regulation of mitotic metaphase/anaphase transition"/>
    <property type="evidence" value="ECO:0000318"/>
    <property type="project" value="GO_Central"/>
</dbReference>
<dbReference type="GO" id="GO:0070979">
    <property type="term" value="P:protein K11-linked ubiquitination"/>
    <property type="evidence" value="ECO:0000318"/>
    <property type="project" value="GO_Central"/>
</dbReference>
<dbReference type="GO" id="GO:0051445">
    <property type="term" value="P:regulation of meiotic cell cycle"/>
    <property type="evidence" value="ECO:0000303"/>
    <property type="project" value="ComplexPortal"/>
</dbReference>
<dbReference type="GO" id="GO:0007346">
    <property type="term" value="P:regulation of mitotic cell cycle"/>
    <property type="evidence" value="ECO:0000303"/>
    <property type="project" value="ComplexPortal"/>
</dbReference>
<dbReference type="Gene3D" id="1.25.40.10">
    <property type="entry name" value="Tetratricopeptide repeat domain"/>
    <property type="match status" value="1"/>
</dbReference>
<dbReference type="InterPro" id="IPR037679">
    <property type="entry name" value="Apc5"/>
</dbReference>
<dbReference type="InterPro" id="IPR011990">
    <property type="entry name" value="TPR-like_helical_dom_sf"/>
</dbReference>
<dbReference type="InterPro" id="IPR019734">
    <property type="entry name" value="TPR_rpt"/>
</dbReference>
<dbReference type="PANTHER" id="PTHR12830">
    <property type="entry name" value="ANAPHASE-PROMOTING COMPLEX SUBUNIT 5"/>
    <property type="match status" value="1"/>
</dbReference>
<dbReference type="PANTHER" id="PTHR12830:SF9">
    <property type="entry name" value="ANAPHASE-PROMOTING COMPLEX SUBUNIT 5"/>
    <property type="match status" value="1"/>
</dbReference>
<dbReference type="SUPFAM" id="SSF48452">
    <property type="entry name" value="TPR-like"/>
    <property type="match status" value="1"/>
</dbReference>
<dbReference type="PROSITE" id="PS50005">
    <property type="entry name" value="TPR"/>
    <property type="match status" value="2"/>
</dbReference>
<sequence length="800" mass="91511">MQKAAPRPIIKRSYLNLDAIFGHVFSNLTGEPVTPTKIATFYLLRILFQTHFGFRHKRAYYKPFSPAEKERIFHWLYALMTSVVELSYKDFRIVTRLAFDDGREVCKNFYAAMEKIGAGMADVTLNVEDEFYTNKHPKDPKLPANDTVHEAMDLARGDIIQFSSNHSFMYRWMKRLLAQYTKSTPSEVFQINAAMKSWVLSAVESKYHPEFKGEYLPHFIDCSVRARDWVAKSIYFIQKNPRFAFQYNEMLHYTRIVQKRHPDVVEGFLLEAIVQVQLKDSSSAIKAMKSFFELSMFELNENMVHAAKTHRLAVPTQTPLMYAPILQARICRIFGDYQMARLLLHESLQQAQLRNDEICHQMANIEMHTVDILGCRALLEDNNEKTAKHIENERRVQRKALLHIDDLHGHTRSGPCCLSSEEDFELVAEMDSYGKMLMLMKIIAEGNYKLIYDRVAETGITCPVGNDLGERGRKVAAYGAALISSNMIHNGMYHQAKCAAENMLANNCRTDETDPFQAPFQAEPWAIGAVNLSYSQAGVGNYDAALRTIEEMRQNYPEELSWQSNRHVVICAAVINFERFLLKNDYKACASEVLNLAAHSELECKLRQALLLAAAGKERASVEVLEGLNVVDIRGRIRIHMQTGCIYTASQEFRKAAREFADALSLAENTTLKDIVPMVKRRQATMLMCHGQYVECLKLLKECNEGIEQFGSFTEKACYYMTAARCHRLLGKDPRMWLKKSRALVRNGQWPAFTKLVLSEIAALHDVKGLMPDENRLSQICEQFGKLTADCPGRCEWLLI</sequence>